<name>DP2L_CENSY</name>
<dbReference type="EC" id="2.7.7.7" evidence="2"/>
<dbReference type="EC" id="3.1.11.1" evidence="2"/>
<dbReference type="EMBL" id="DP000238">
    <property type="protein sequence ID" value="ABK78437.1"/>
    <property type="molecule type" value="Genomic_DNA"/>
</dbReference>
<dbReference type="SMR" id="A0RYM0"/>
<dbReference type="STRING" id="414004.CENSYa_1827"/>
<dbReference type="EnsemblBacteria" id="ABK78437">
    <property type="protein sequence ID" value="ABK78437"/>
    <property type="gene ID" value="CENSYa_1827"/>
</dbReference>
<dbReference type="KEGG" id="csy:CENSYa_1827"/>
<dbReference type="PATRIC" id="fig|414004.10.peg.1669"/>
<dbReference type="HOGENOM" id="CLU_001154_0_0_2"/>
<dbReference type="Proteomes" id="UP000000758">
    <property type="component" value="Chromosome"/>
</dbReference>
<dbReference type="GO" id="GO:0003677">
    <property type="term" value="F:DNA binding"/>
    <property type="evidence" value="ECO:0007669"/>
    <property type="project" value="UniProtKB-UniRule"/>
</dbReference>
<dbReference type="GO" id="GO:0003887">
    <property type="term" value="F:DNA-directed DNA polymerase activity"/>
    <property type="evidence" value="ECO:0007669"/>
    <property type="project" value="UniProtKB-UniRule"/>
</dbReference>
<dbReference type="GO" id="GO:0008310">
    <property type="term" value="F:single-stranded DNA 3'-5' DNA exonuclease activity"/>
    <property type="evidence" value="ECO:0007669"/>
    <property type="project" value="UniProtKB-EC"/>
</dbReference>
<dbReference type="GO" id="GO:0006308">
    <property type="term" value="P:DNA catabolic process"/>
    <property type="evidence" value="ECO:0007669"/>
    <property type="project" value="UniProtKB-UniRule"/>
</dbReference>
<dbReference type="GO" id="GO:0006261">
    <property type="term" value="P:DNA-templated DNA replication"/>
    <property type="evidence" value="ECO:0007669"/>
    <property type="project" value="UniProtKB-UniRule"/>
</dbReference>
<dbReference type="HAMAP" id="MF_00324">
    <property type="entry name" value="DNApol_II_L_arch"/>
    <property type="match status" value="1"/>
</dbReference>
<dbReference type="InterPro" id="IPR004475">
    <property type="entry name" value="PolC_DP2"/>
</dbReference>
<dbReference type="InterPro" id="IPR056172">
    <property type="entry name" value="PolC_DP2_cat_dom"/>
</dbReference>
<dbReference type="InterPro" id="IPR056171">
    <property type="entry name" value="PolC_DP2_central_dom"/>
</dbReference>
<dbReference type="InterPro" id="IPR016033">
    <property type="entry name" value="PolC_DP2_N"/>
</dbReference>
<dbReference type="NCBIfam" id="TIGR00354">
    <property type="entry name" value="polC"/>
    <property type="match status" value="1"/>
</dbReference>
<dbReference type="NCBIfam" id="NF003103">
    <property type="entry name" value="PRK04023.1"/>
    <property type="match status" value="1"/>
</dbReference>
<dbReference type="PANTHER" id="PTHR42210">
    <property type="entry name" value="DNA POLYMERASE II LARGE SUBUNIT"/>
    <property type="match status" value="1"/>
</dbReference>
<dbReference type="PANTHER" id="PTHR42210:SF1">
    <property type="entry name" value="DNA POLYMERASE II LARGE SUBUNIT"/>
    <property type="match status" value="1"/>
</dbReference>
<dbReference type="Pfam" id="PF24846">
    <property type="entry name" value="PolC_DP2_cat"/>
    <property type="match status" value="1"/>
</dbReference>
<dbReference type="Pfam" id="PF24844">
    <property type="entry name" value="PolC_DP2_central"/>
    <property type="match status" value="1"/>
</dbReference>
<dbReference type="Pfam" id="PF03833">
    <property type="entry name" value="PolC_DP2_N"/>
    <property type="match status" value="1"/>
</dbReference>
<dbReference type="PIRSF" id="PIRSF016275">
    <property type="entry name" value="PolC_DP2"/>
    <property type="match status" value="1"/>
</dbReference>
<accession>A0RYM0</accession>
<proteinExistence type="inferred from homology"/>
<protein>
    <recommendedName>
        <fullName evidence="2">DNA polymerase II large subunit</fullName>
        <shortName evidence="2">Pol II</shortName>
        <ecNumber evidence="2">2.7.7.7</ecNumber>
    </recommendedName>
    <alternativeName>
        <fullName evidence="2">Exodeoxyribonuclease large subunit</fullName>
        <ecNumber evidence="2">3.1.11.1</ecNumber>
    </alternativeName>
</protein>
<comment type="function">
    <text evidence="1">Possesses two activities: a DNA synthesis (polymerase) and an exonucleolytic activity that degrades single-stranded DNA in the 3'- to 5'-direction. Has a template-primer preference which is characteristic of a replicative DNA polymerase (By similarity).</text>
</comment>
<comment type="catalytic activity">
    <reaction evidence="2">
        <text>DNA(n) + a 2'-deoxyribonucleoside 5'-triphosphate = DNA(n+1) + diphosphate</text>
        <dbReference type="Rhea" id="RHEA:22508"/>
        <dbReference type="Rhea" id="RHEA-COMP:17339"/>
        <dbReference type="Rhea" id="RHEA-COMP:17340"/>
        <dbReference type="ChEBI" id="CHEBI:33019"/>
        <dbReference type="ChEBI" id="CHEBI:61560"/>
        <dbReference type="ChEBI" id="CHEBI:173112"/>
        <dbReference type="EC" id="2.7.7.7"/>
    </reaction>
</comment>
<comment type="catalytic activity">
    <reaction evidence="2">
        <text>Exonucleolytic cleavage in the 3'- to 5'-direction to yield nucleoside 5'-phosphates.</text>
        <dbReference type="EC" id="3.1.11.1"/>
    </reaction>
</comment>
<comment type="subunit">
    <text evidence="2">Heterodimer of a large subunit and a small subunit.</text>
</comment>
<comment type="similarity">
    <text evidence="2">Belongs to the archaeal DNA polymerase II family.</text>
</comment>
<organism>
    <name type="scientific">Cenarchaeum symbiosum (strain A)</name>
    <dbReference type="NCBI Taxonomy" id="414004"/>
    <lineage>
        <taxon>Archaea</taxon>
        <taxon>Nitrososphaerota</taxon>
        <taxon>Candidatus Cenarchaeales</taxon>
        <taxon>Candidatus Cenarchaeaceae</taxon>
        <taxon>Candidatus Cenarchaeum</taxon>
    </lineage>
</organism>
<feature type="chain" id="PRO_0000294676" description="DNA polymerase II large subunit">
    <location>
        <begin position="1"/>
        <end position="1112"/>
    </location>
</feature>
<evidence type="ECO:0000250" key="1"/>
<evidence type="ECO:0000255" key="2">
    <source>
        <dbReference type="HAMAP-Rule" id="MF_00324"/>
    </source>
</evidence>
<reference key="1">
    <citation type="journal article" date="2006" name="Proc. Natl. Acad. Sci. U.S.A.">
        <title>Genomic analysis of the uncultivated marine crenarchaeote Cenarchaeum symbiosum.</title>
        <authorList>
            <person name="Hallam S.J."/>
            <person name="Konstantinidis K.T."/>
            <person name="Putnam N."/>
            <person name="Schleper C."/>
            <person name="Watanabe Y."/>
            <person name="Sugahara J."/>
            <person name="Preston C."/>
            <person name="de la Torre J."/>
            <person name="Richardson P.M."/>
            <person name="DeLong E.F."/>
        </authorList>
    </citation>
    <scope>NUCLEOTIDE SEQUENCE [LARGE SCALE GENOMIC DNA]</scope>
    <source>
        <strain>A</strain>
    </source>
</reference>
<keyword id="KW-0235">DNA replication</keyword>
<keyword id="KW-0238">DNA-binding</keyword>
<keyword id="KW-0239">DNA-directed DNA polymerase</keyword>
<keyword id="KW-0269">Exonuclease</keyword>
<keyword id="KW-0378">Hydrolase</keyword>
<keyword id="KW-0511">Multifunctional enzyme</keyword>
<keyword id="KW-0540">Nuclease</keyword>
<keyword id="KW-0548">Nucleotidyltransferase</keyword>
<keyword id="KW-1185">Reference proteome</keyword>
<keyword id="KW-0808">Transferase</keyword>
<gene>
    <name evidence="2" type="primary">polC</name>
    <name type="ordered locus">CENSYa_1827</name>
</gene>
<sequence>MSGGDVEEYLRGADMPEEYRRYYSSLSGGTYDIFEKAASAKSNLADSSGMVEPKIAVDLSDRVAKMHDLDIAGPLRELLATKGKELAALMLAKEIMDGKYLPEADIEKRIDSAVRVGLAVVTEGVTIAPLQGIADVITKKNKDGSEYLSVSIAGPMRSAGGTESAVTMLIADYVRRQAGLAEYQADSLDDETGRFIEELRIYEREVGSFQFHVLDEDIRAVISHLPVELDGVDTDPYEVVNHKGMSRIQTDRVRGGALRVLNDGLIGRSKKLLKRIELYGLDGWEWLAELKGAVQTGENKEDAAAKRMREVITGRSVLSMPNRLGGFRLRYGRACNTGYTSVGFHPAVAEILDHTIAVGTQVKIDIPGKGATVAFVDTIEAPTVRLAGGDVVKIRDVAHGIELKGSIERILHLGDMLISFGDFLENNAQLVPSGYVEEIWKMDMEAAGAAQGSPSSADEAVRISRELGVPLHPRYLYYWDQISHEELAMLLSPLDKGDAISYPAACKPVLEKLGVPHKAGPEGPVLEGDEARIFRELILDNPPGPDASAPVPELISRSSGITIRDKFSTSIGVRIGRPEKAAPRQMRPPTHCLFPVGGTGGPTNNLLKSAARPGFSADILSRRCPGCGEPSISIRCWACGERTAVERTCMQCGTDVDGEECERCGRPGLAHSRVEFPLKKMLVSAQEKTGVRAHDPLKGVKELAHQDRIAEPLEKGLIRQSRSLTVFKDGTVRFDATNSPMTHFKPSWIGTSAEKLRELGYETDVDGKKLEGPDQLVELRMQDIVIPLEGAKYLVSACGYIDAELDKLYGAPPFYKVPDLGGLIGHLVVGLAPHTSVGVAARIIGYTETHVCFGTPNWHSAKRRDADGDADSIILLMDALLNFSRHYLSDRIGGLMDAPLLIQPLVLPHESQSQAHNIEVVKRLPPGFYEAAAARKKASEVGCVEIVKSRLETAGQFGGYHFTHGTSSLTTSRPRSAYSTLGSMLDKLDLQIRNANLIAAVDAAEIISNVISTHLVPDIMGNLRAYARQNFRCTACGKSYRRIPLAQRCSCGNGLIQTITRASVEKYLKLAKRLVNEYDVGAYQRGRIHALSDEIELVFGKGGGDQALLTDF</sequence>